<gene>
    <name type="ordered locus">YPO0911</name>
    <name type="ordered locus">y3298</name>
    <name type="ordered locus">YP_3608</name>
</gene>
<protein>
    <recommendedName>
        <fullName evidence="1">UPF0149 protein YPO0911/y3298/YP_3608</fullName>
    </recommendedName>
</protein>
<comment type="similarity">
    <text evidence="1">Belongs to the UPF0149 family.</text>
</comment>
<reference key="1">
    <citation type="journal article" date="2001" name="Nature">
        <title>Genome sequence of Yersinia pestis, the causative agent of plague.</title>
        <authorList>
            <person name="Parkhill J."/>
            <person name="Wren B.W."/>
            <person name="Thomson N.R."/>
            <person name="Titball R.W."/>
            <person name="Holden M.T.G."/>
            <person name="Prentice M.B."/>
            <person name="Sebaihia M."/>
            <person name="James K.D."/>
            <person name="Churcher C.M."/>
            <person name="Mungall K.L."/>
            <person name="Baker S."/>
            <person name="Basham D."/>
            <person name="Bentley S.D."/>
            <person name="Brooks K."/>
            <person name="Cerdeno-Tarraga A.-M."/>
            <person name="Chillingworth T."/>
            <person name="Cronin A."/>
            <person name="Davies R.M."/>
            <person name="Davis P."/>
            <person name="Dougan G."/>
            <person name="Feltwell T."/>
            <person name="Hamlin N."/>
            <person name="Holroyd S."/>
            <person name="Jagels K."/>
            <person name="Karlyshev A.V."/>
            <person name="Leather S."/>
            <person name="Moule S."/>
            <person name="Oyston P.C.F."/>
            <person name="Quail M.A."/>
            <person name="Rutherford K.M."/>
            <person name="Simmonds M."/>
            <person name="Skelton J."/>
            <person name="Stevens K."/>
            <person name="Whitehead S."/>
            <person name="Barrell B.G."/>
        </authorList>
    </citation>
    <scope>NUCLEOTIDE SEQUENCE [LARGE SCALE GENOMIC DNA]</scope>
    <source>
        <strain>CO-92 / Biovar Orientalis</strain>
    </source>
</reference>
<reference key="2">
    <citation type="journal article" date="2002" name="J. Bacteriol.">
        <title>Genome sequence of Yersinia pestis KIM.</title>
        <authorList>
            <person name="Deng W."/>
            <person name="Burland V."/>
            <person name="Plunkett G. III"/>
            <person name="Boutin A."/>
            <person name="Mayhew G.F."/>
            <person name="Liss P."/>
            <person name="Perna N.T."/>
            <person name="Rose D.J."/>
            <person name="Mau B."/>
            <person name="Zhou S."/>
            <person name="Schwartz D.C."/>
            <person name="Fetherston J.D."/>
            <person name="Lindler L.E."/>
            <person name="Brubaker R.R."/>
            <person name="Plano G.V."/>
            <person name="Straley S.C."/>
            <person name="McDonough K.A."/>
            <person name="Nilles M.L."/>
            <person name="Matson J.S."/>
            <person name="Blattner F.R."/>
            <person name="Perry R.D."/>
        </authorList>
    </citation>
    <scope>NUCLEOTIDE SEQUENCE [LARGE SCALE GENOMIC DNA]</scope>
    <source>
        <strain>KIM10+ / Biovar Mediaevalis</strain>
    </source>
</reference>
<reference key="3">
    <citation type="journal article" date="2004" name="DNA Res.">
        <title>Complete genome sequence of Yersinia pestis strain 91001, an isolate avirulent to humans.</title>
        <authorList>
            <person name="Song Y."/>
            <person name="Tong Z."/>
            <person name="Wang J."/>
            <person name="Wang L."/>
            <person name="Guo Z."/>
            <person name="Han Y."/>
            <person name="Zhang J."/>
            <person name="Pei D."/>
            <person name="Zhou D."/>
            <person name="Qin H."/>
            <person name="Pang X."/>
            <person name="Han Y."/>
            <person name="Zhai J."/>
            <person name="Li M."/>
            <person name="Cui B."/>
            <person name="Qi Z."/>
            <person name="Jin L."/>
            <person name="Dai R."/>
            <person name="Chen F."/>
            <person name="Li S."/>
            <person name="Ye C."/>
            <person name="Du Z."/>
            <person name="Lin W."/>
            <person name="Wang J."/>
            <person name="Yu J."/>
            <person name="Yang H."/>
            <person name="Wang J."/>
            <person name="Huang P."/>
            <person name="Yang R."/>
        </authorList>
    </citation>
    <scope>NUCLEOTIDE SEQUENCE [LARGE SCALE GENOMIC DNA]</scope>
    <source>
        <strain>91001 / Biovar Mediaevalis</strain>
    </source>
</reference>
<feature type="chain" id="PRO_0000207578" description="UPF0149 protein YPO0911/y3298/YP_3608">
    <location>
        <begin position="1"/>
        <end position="192"/>
    </location>
</feature>
<name>Y911_YERPE</name>
<proteinExistence type="inferred from homology"/>
<keyword id="KW-1185">Reference proteome</keyword>
<sequence>MSIENTLPTYPSLALALSQQAVALTPAEMHGLISGMLCGGSKDNGWQTLVHDLTNEGVAFPQALSLPLQQLHEATQEALENEGFMFQLLIPEGEDVTVFDRADALSGWVNHFLLGLGMLQPKLAQVKDEVGEAIDDLRNIAQLGYDEDEDQEELAQSLEEVVEYVRVAAILCHIEFTQQKPTAPEMHKPTLH</sequence>
<accession>Q8ZHI2</accession>
<accession>Q0WIC9</accession>
<dbReference type="EMBL" id="AL590842">
    <property type="protein sequence ID" value="CAL19578.1"/>
    <property type="molecule type" value="Genomic_DNA"/>
</dbReference>
<dbReference type="EMBL" id="AE009952">
    <property type="protein sequence ID" value="AAM86848.1"/>
    <property type="molecule type" value="Genomic_DNA"/>
</dbReference>
<dbReference type="EMBL" id="AE017042">
    <property type="protein sequence ID" value="AAS63758.1"/>
    <property type="molecule type" value="Genomic_DNA"/>
</dbReference>
<dbReference type="PIR" id="AH0111">
    <property type="entry name" value="AH0111"/>
</dbReference>
<dbReference type="RefSeq" id="WP_002209953.1">
    <property type="nucleotide sequence ID" value="NZ_WUCM01000038.1"/>
</dbReference>
<dbReference type="RefSeq" id="YP_002345959.1">
    <property type="nucleotide sequence ID" value="NC_003143.1"/>
</dbReference>
<dbReference type="SMR" id="Q8ZHI2"/>
<dbReference type="IntAct" id="Q8ZHI2">
    <property type="interactions" value="1"/>
</dbReference>
<dbReference type="STRING" id="214092.YPO0911"/>
<dbReference type="PaxDb" id="214092-YPO0911"/>
<dbReference type="DNASU" id="1148245"/>
<dbReference type="EnsemblBacteria" id="AAS63758">
    <property type="protein sequence ID" value="AAS63758"/>
    <property type="gene ID" value="YP_3608"/>
</dbReference>
<dbReference type="KEGG" id="ype:YPO0911"/>
<dbReference type="KEGG" id="ypk:y3298"/>
<dbReference type="KEGG" id="ypm:YP_3608"/>
<dbReference type="PATRIC" id="fig|214092.21.peg.1185"/>
<dbReference type="eggNOG" id="COG3079">
    <property type="taxonomic scope" value="Bacteria"/>
</dbReference>
<dbReference type="HOGENOM" id="CLU_085336_1_0_6"/>
<dbReference type="OMA" id="WVNHFIS"/>
<dbReference type="OrthoDB" id="9783391at2"/>
<dbReference type="Proteomes" id="UP000000815">
    <property type="component" value="Chromosome"/>
</dbReference>
<dbReference type="Proteomes" id="UP000001019">
    <property type="component" value="Chromosome"/>
</dbReference>
<dbReference type="Proteomes" id="UP000002490">
    <property type="component" value="Chromosome"/>
</dbReference>
<dbReference type="GO" id="GO:0005829">
    <property type="term" value="C:cytosol"/>
    <property type="evidence" value="ECO:0000318"/>
    <property type="project" value="GO_Central"/>
</dbReference>
<dbReference type="FunFam" id="1.20.120.740:FF:000001">
    <property type="entry name" value="UPF0149 protein YgfB"/>
    <property type="match status" value="1"/>
</dbReference>
<dbReference type="Gene3D" id="1.20.120.740">
    <property type="entry name" value="YgfB uncharacterised protein family UPF0149, PF03695"/>
    <property type="match status" value="1"/>
</dbReference>
<dbReference type="HAMAP" id="MF_00346">
    <property type="entry name" value="UPF0149"/>
    <property type="match status" value="1"/>
</dbReference>
<dbReference type="InterPro" id="IPR011978">
    <property type="entry name" value="YgfB-like"/>
</dbReference>
<dbReference type="InterPro" id="IPR036255">
    <property type="entry name" value="YgfB-like_sf"/>
</dbReference>
<dbReference type="NCBIfam" id="NF002477">
    <property type="entry name" value="PRK01736.1"/>
    <property type="match status" value="1"/>
</dbReference>
<dbReference type="NCBIfam" id="TIGR02292">
    <property type="entry name" value="ygfB_yecA"/>
    <property type="match status" value="1"/>
</dbReference>
<dbReference type="PANTHER" id="PTHR37528">
    <property type="entry name" value="UPF0149 PROTEIN YGFB"/>
    <property type="match status" value="1"/>
</dbReference>
<dbReference type="PANTHER" id="PTHR37528:SF1">
    <property type="entry name" value="UPF0149 PROTEIN YGFB"/>
    <property type="match status" value="1"/>
</dbReference>
<dbReference type="Pfam" id="PF03695">
    <property type="entry name" value="UPF0149"/>
    <property type="match status" value="1"/>
</dbReference>
<dbReference type="SUPFAM" id="SSF101327">
    <property type="entry name" value="YgfB-like"/>
    <property type="match status" value="1"/>
</dbReference>
<organism>
    <name type="scientific">Yersinia pestis</name>
    <dbReference type="NCBI Taxonomy" id="632"/>
    <lineage>
        <taxon>Bacteria</taxon>
        <taxon>Pseudomonadati</taxon>
        <taxon>Pseudomonadota</taxon>
        <taxon>Gammaproteobacteria</taxon>
        <taxon>Enterobacterales</taxon>
        <taxon>Yersiniaceae</taxon>
        <taxon>Yersinia</taxon>
    </lineage>
</organism>
<evidence type="ECO:0000255" key="1">
    <source>
        <dbReference type="HAMAP-Rule" id="MF_00346"/>
    </source>
</evidence>